<feature type="chain" id="PRO_0000341806" description="2-succinyl-5-enolpyruvyl-6-hydroxy-3-cyclohexene-1-carboxylate synthase">
    <location>
        <begin position="1"/>
        <end position="598"/>
    </location>
</feature>
<evidence type="ECO:0000255" key="1">
    <source>
        <dbReference type="HAMAP-Rule" id="MF_01659"/>
    </source>
</evidence>
<reference key="1">
    <citation type="journal article" date="2007" name="PLoS Genet.">
        <title>Patterns and implications of gene gain and loss in the evolution of Prochlorococcus.</title>
        <authorList>
            <person name="Kettler G.C."/>
            <person name="Martiny A.C."/>
            <person name="Huang K."/>
            <person name="Zucker J."/>
            <person name="Coleman M.L."/>
            <person name="Rodrigue S."/>
            <person name="Chen F."/>
            <person name="Lapidus A."/>
            <person name="Ferriera S."/>
            <person name="Johnson J."/>
            <person name="Steglich C."/>
            <person name="Church G.M."/>
            <person name="Richardson P."/>
            <person name="Chisholm S.W."/>
        </authorList>
    </citation>
    <scope>NUCLEOTIDE SEQUENCE [LARGE SCALE GENOMIC DNA]</scope>
    <source>
        <strain>NATL1A</strain>
    </source>
</reference>
<protein>
    <recommendedName>
        <fullName evidence="1">2-succinyl-5-enolpyruvyl-6-hydroxy-3-cyclohexene-1-carboxylate synthase</fullName>
        <shortName evidence="1">SEPHCHC synthase</shortName>
        <ecNumber evidence="1">2.2.1.9</ecNumber>
    </recommendedName>
</protein>
<gene>
    <name evidence="1" type="primary">menD</name>
    <name type="ordered locus">NATL1_06631</name>
</gene>
<sequence length="598" mass="66442">MTISLARYNFFISLELLKTLVAKGVKYFVLCPGSRSGPLALAAASLSKRKELTLITSIDERSAAFLALGISAASGQVSCVITTSGSAVANLLPAAVEADRSCHPLLFLTADRPLRLKECGANQAVNQQDFLKSVCRHFDESPKEGIHLISKERLTSLVGKSFEMASNIPGPVHINLAYEEPLHPCEIDQNKVLDGWGIEGFLKEKVTPNKVEVFKSFQSLKLPKLDPFSLGIIILGPWRGKVKQLNSFRGALKQWQKLTGWPILADPLSGVENDQEGLINHWDLFFSIGLFEKIKEIQVLRLGPIPPSRELQTWLKKPGKFQLLITEGDCRNLDPIGGSTQFSEGFSCWVDKMLECIPVKPAIDKKIVSQKLTKELIKYDLFINHWLDKRLFRNGLITEPALARLLPRLLPDSIPVMIASSSPIRDWLSYSGEGAFLRRCFGFRGASGIDGTLSMGMGLSIIMGRMVLVTGDLALLHDTNGWLFSKDKNISLIVIMIDNGGGGIFNQLNIDRIKEGDFEEIFLMPQQVCHLTLAKAYGLKYKQVACLDDLEKAIEWSFSLSTNVLIRVCTNSIEDHRLRVNLSDDLKKTLSENLSSFD</sequence>
<organism>
    <name type="scientific">Prochlorococcus marinus (strain NATL1A)</name>
    <dbReference type="NCBI Taxonomy" id="167555"/>
    <lineage>
        <taxon>Bacteria</taxon>
        <taxon>Bacillati</taxon>
        <taxon>Cyanobacteriota</taxon>
        <taxon>Cyanophyceae</taxon>
        <taxon>Synechococcales</taxon>
        <taxon>Prochlorococcaceae</taxon>
        <taxon>Prochlorococcus</taxon>
    </lineage>
</organism>
<name>MEND_PROM1</name>
<comment type="function">
    <text evidence="1">Catalyzes the thiamine diphosphate-dependent decarboxylation of 2-oxoglutarate and the subsequent addition of the resulting succinic semialdehyde-thiamine pyrophosphate anion to isochorismate to yield 2-succinyl-5-enolpyruvyl-6-hydroxy-3-cyclohexene-1-carboxylate (SEPHCHC).</text>
</comment>
<comment type="catalytic activity">
    <reaction evidence="1">
        <text>isochorismate + 2-oxoglutarate + H(+) = 5-enolpyruvoyl-6-hydroxy-2-succinyl-cyclohex-3-ene-1-carboxylate + CO2</text>
        <dbReference type="Rhea" id="RHEA:25593"/>
        <dbReference type="ChEBI" id="CHEBI:15378"/>
        <dbReference type="ChEBI" id="CHEBI:16526"/>
        <dbReference type="ChEBI" id="CHEBI:16810"/>
        <dbReference type="ChEBI" id="CHEBI:29780"/>
        <dbReference type="ChEBI" id="CHEBI:58818"/>
        <dbReference type="EC" id="2.2.1.9"/>
    </reaction>
</comment>
<comment type="cofactor">
    <cofactor evidence="1">
        <name>Mg(2+)</name>
        <dbReference type="ChEBI" id="CHEBI:18420"/>
    </cofactor>
    <cofactor evidence="1">
        <name>Mn(2+)</name>
        <dbReference type="ChEBI" id="CHEBI:29035"/>
    </cofactor>
</comment>
<comment type="cofactor">
    <cofactor evidence="1">
        <name>thiamine diphosphate</name>
        <dbReference type="ChEBI" id="CHEBI:58937"/>
    </cofactor>
    <text evidence="1">Binds 1 thiamine pyrophosphate per subunit.</text>
</comment>
<comment type="pathway">
    <text evidence="1">Quinol/quinone metabolism; 1,4-dihydroxy-2-naphthoate biosynthesis; 1,4-dihydroxy-2-naphthoate from chorismate: step 2/7.</text>
</comment>
<comment type="pathway">
    <text evidence="1">Cofactor biosynthesis; phylloquinone biosynthesis.</text>
</comment>
<comment type="subunit">
    <text evidence="1">Homodimer.</text>
</comment>
<comment type="similarity">
    <text evidence="1">Belongs to the TPP enzyme family. MenD subfamily.</text>
</comment>
<accession>A2C165</accession>
<keyword id="KW-0460">Magnesium</keyword>
<keyword id="KW-0464">Manganese</keyword>
<keyword id="KW-0479">Metal-binding</keyword>
<keyword id="KW-0786">Thiamine pyrophosphate</keyword>
<keyword id="KW-0808">Transferase</keyword>
<dbReference type="EC" id="2.2.1.9" evidence="1"/>
<dbReference type="EMBL" id="CP000553">
    <property type="protein sequence ID" value="ABM75225.1"/>
    <property type="molecule type" value="Genomic_DNA"/>
</dbReference>
<dbReference type="RefSeq" id="WP_011823386.1">
    <property type="nucleotide sequence ID" value="NC_008819.1"/>
</dbReference>
<dbReference type="SMR" id="A2C165"/>
<dbReference type="KEGG" id="pme:NATL1_06631"/>
<dbReference type="eggNOG" id="COG1165">
    <property type="taxonomic scope" value="Bacteria"/>
</dbReference>
<dbReference type="HOGENOM" id="CLU_006051_3_0_3"/>
<dbReference type="UniPathway" id="UPA00995"/>
<dbReference type="UniPathway" id="UPA01057">
    <property type="reaction ID" value="UER00164"/>
</dbReference>
<dbReference type="Proteomes" id="UP000002592">
    <property type="component" value="Chromosome"/>
</dbReference>
<dbReference type="GO" id="GO:0070204">
    <property type="term" value="F:2-succinyl-5-enolpyruvyl-6-hydroxy-3-cyclohexene-1-carboxylic-acid synthase activity"/>
    <property type="evidence" value="ECO:0007669"/>
    <property type="project" value="UniProtKB-UniRule"/>
</dbReference>
<dbReference type="GO" id="GO:0000287">
    <property type="term" value="F:magnesium ion binding"/>
    <property type="evidence" value="ECO:0007669"/>
    <property type="project" value="UniProtKB-UniRule"/>
</dbReference>
<dbReference type="GO" id="GO:0030145">
    <property type="term" value="F:manganese ion binding"/>
    <property type="evidence" value="ECO:0007669"/>
    <property type="project" value="UniProtKB-UniRule"/>
</dbReference>
<dbReference type="GO" id="GO:0030976">
    <property type="term" value="F:thiamine pyrophosphate binding"/>
    <property type="evidence" value="ECO:0007669"/>
    <property type="project" value="UniProtKB-UniRule"/>
</dbReference>
<dbReference type="GO" id="GO:0009234">
    <property type="term" value="P:menaquinone biosynthetic process"/>
    <property type="evidence" value="ECO:0007669"/>
    <property type="project" value="InterPro"/>
</dbReference>
<dbReference type="GO" id="GO:0042372">
    <property type="term" value="P:phylloquinone biosynthetic process"/>
    <property type="evidence" value="ECO:0007669"/>
    <property type="project" value="UniProtKB-UniRule"/>
</dbReference>
<dbReference type="CDD" id="cd07037">
    <property type="entry name" value="TPP_PYR_MenD"/>
    <property type="match status" value="1"/>
</dbReference>
<dbReference type="CDD" id="cd02009">
    <property type="entry name" value="TPP_SHCHC_synthase"/>
    <property type="match status" value="1"/>
</dbReference>
<dbReference type="Gene3D" id="3.40.50.970">
    <property type="match status" value="2"/>
</dbReference>
<dbReference type="Gene3D" id="3.40.50.1220">
    <property type="entry name" value="TPP-binding domain"/>
    <property type="match status" value="1"/>
</dbReference>
<dbReference type="HAMAP" id="MF_01659">
    <property type="entry name" value="MenD"/>
    <property type="match status" value="1"/>
</dbReference>
<dbReference type="InterPro" id="IPR004433">
    <property type="entry name" value="MenaQ_synth_MenD"/>
</dbReference>
<dbReference type="InterPro" id="IPR029061">
    <property type="entry name" value="THDP-binding"/>
</dbReference>
<dbReference type="InterPro" id="IPR012001">
    <property type="entry name" value="Thiamin_PyroP_enz_TPP-bd_dom"/>
</dbReference>
<dbReference type="InterPro" id="IPR011766">
    <property type="entry name" value="TPP_enzyme_TPP-bd"/>
</dbReference>
<dbReference type="NCBIfam" id="TIGR00173">
    <property type="entry name" value="menD"/>
    <property type="match status" value="1"/>
</dbReference>
<dbReference type="PANTHER" id="PTHR42916">
    <property type="entry name" value="2-SUCCINYL-5-ENOLPYRUVYL-6-HYDROXY-3-CYCLOHEXENE-1-CARBOXYLATE SYNTHASE"/>
    <property type="match status" value="1"/>
</dbReference>
<dbReference type="PANTHER" id="PTHR42916:SF1">
    <property type="entry name" value="PROTEIN PHYLLO, CHLOROPLASTIC"/>
    <property type="match status" value="1"/>
</dbReference>
<dbReference type="Pfam" id="PF02775">
    <property type="entry name" value="TPP_enzyme_C"/>
    <property type="match status" value="1"/>
</dbReference>
<dbReference type="Pfam" id="PF02776">
    <property type="entry name" value="TPP_enzyme_N"/>
    <property type="match status" value="1"/>
</dbReference>
<dbReference type="PIRSF" id="PIRSF004983">
    <property type="entry name" value="MenD"/>
    <property type="match status" value="1"/>
</dbReference>
<dbReference type="SUPFAM" id="SSF52518">
    <property type="entry name" value="Thiamin diphosphate-binding fold (THDP-binding)"/>
    <property type="match status" value="2"/>
</dbReference>
<proteinExistence type="inferred from homology"/>